<reference key="1">
    <citation type="submission" date="2008-10" db="EMBL/GenBank/DDBJ databases">
        <title>Genome sequence of Bacillus cereus AH187.</title>
        <authorList>
            <person name="Dodson R.J."/>
            <person name="Durkin A.S."/>
            <person name="Rosovitz M.J."/>
            <person name="Rasko D.A."/>
            <person name="Kolsto A.B."/>
            <person name="Okstad O.A."/>
            <person name="Ravel J."/>
            <person name="Sutton G."/>
        </authorList>
    </citation>
    <scope>NUCLEOTIDE SEQUENCE [LARGE SCALE GENOMIC DNA]</scope>
    <source>
        <strain>AH187</strain>
    </source>
</reference>
<evidence type="ECO:0000255" key="1">
    <source>
        <dbReference type="HAMAP-Rule" id="MF_00502"/>
    </source>
</evidence>
<evidence type="ECO:0000305" key="2"/>
<accession>B7HY91</accession>
<keyword id="KW-0687">Ribonucleoprotein</keyword>
<keyword id="KW-0689">Ribosomal protein</keyword>
<name>RL31B_BACC7</name>
<comment type="subunit">
    <text evidence="1">Part of the 50S ribosomal subunit.</text>
</comment>
<comment type="similarity">
    <text evidence="1">Belongs to the bacterial ribosomal protein bL31 family. Type B subfamily.</text>
</comment>
<protein>
    <recommendedName>
        <fullName evidence="1">Large ribosomal subunit protein bL31B</fullName>
    </recommendedName>
    <alternativeName>
        <fullName evidence="2">50S ribosomal protein L31 type B</fullName>
    </alternativeName>
</protein>
<organism>
    <name type="scientific">Bacillus cereus (strain AH187)</name>
    <dbReference type="NCBI Taxonomy" id="405534"/>
    <lineage>
        <taxon>Bacteria</taxon>
        <taxon>Bacillati</taxon>
        <taxon>Bacillota</taxon>
        <taxon>Bacilli</taxon>
        <taxon>Bacillales</taxon>
        <taxon>Bacillaceae</taxon>
        <taxon>Bacillus</taxon>
        <taxon>Bacillus cereus group</taxon>
    </lineage>
</organism>
<dbReference type="EMBL" id="CP001177">
    <property type="protein sequence ID" value="ACJ77478.1"/>
    <property type="molecule type" value="Genomic_DNA"/>
</dbReference>
<dbReference type="SMR" id="B7HY91"/>
<dbReference type="KEGG" id="bcr:BCAH187_A5509"/>
<dbReference type="HOGENOM" id="CLU_114306_2_2_9"/>
<dbReference type="Proteomes" id="UP000002214">
    <property type="component" value="Chromosome"/>
</dbReference>
<dbReference type="GO" id="GO:1990904">
    <property type="term" value="C:ribonucleoprotein complex"/>
    <property type="evidence" value="ECO:0007669"/>
    <property type="project" value="UniProtKB-KW"/>
</dbReference>
<dbReference type="GO" id="GO:0005840">
    <property type="term" value="C:ribosome"/>
    <property type="evidence" value="ECO:0007669"/>
    <property type="project" value="UniProtKB-KW"/>
</dbReference>
<dbReference type="GO" id="GO:0003735">
    <property type="term" value="F:structural constituent of ribosome"/>
    <property type="evidence" value="ECO:0007669"/>
    <property type="project" value="InterPro"/>
</dbReference>
<dbReference type="GO" id="GO:0006412">
    <property type="term" value="P:translation"/>
    <property type="evidence" value="ECO:0007669"/>
    <property type="project" value="UniProtKB-UniRule"/>
</dbReference>
<dbReference type="Gene3D" id="4.10.830.30">
    <property type="entry name" value="Ribosomal protein L31"/>
    <property type="match status" value="1"/>
</dbReference>
<dbReference type="HAMAP" id="MF_00502">
    <property type="entry name" value="Ribosomal_bL31_2"/>
    <property type="match status" value="1"/>
</dbReference>
<dbReference type="InterPro" id="IPR034704">
    <property type="entry name" value="Ribosomal_bL28/bL31-like_sf"/>
</dbReference>
<dbReference type="InterPro" id="IPR002150">
    <property type="entry name" value="Ribosomal_bL31"/>
</dbReference>
<dbReference type="InterPro" id="IPR027493">
    <property type="entry name" value="Ribosomal_bL31_B"/>
</dbReference>
<dbReference type="InterPro" id="IPR042105">
    <property type="entry name" value="Ribosomal_bL31_sf"/>
</dbReference>
<dbReference type="NCBIfam" id="TIGR00105">
    <property type="entry name" value="L31"/>
    <property type="match status" value="1"/>
</dbReference>
<dbReference type="NCBIfam" id="NF002462">
    <property type="entry name" value="PRK01678.1"/>
    <property type="match status" value="1"/>
</dbReference>
<dbReference type="PANTHER" id="PTHR33280">
    <property type="entry name" value="50S RIBOSOMAL PROTEIN L31, CHLOROPLASTIC"/>
    <property type="match status" value="1"/>
</dbReference>
<dbReference type="PANTHER" id="PTHR33280:SF1">
    <property type="entry name" value="LARGE RIBOSOMAL SUBUNIT PROTEIN BL31C"/>
    <property type="match status" value="1"/>
</dbReference>
<dbReference type="Pfam" id="PF01197">
    <property type="entry name" value="Ribosomal_L31"/>
    <property type="match status" value="1"/>
</dbReference>
<dbReference type="PRINTS" id="PR01249">
    <property type="entry name" value="RIBOSOMALL31"/>
</dbReference>
<dbReference type="SUPFAM" id="SSF143800">
    <property type="entry name" value="L28p-like"/>
    <property type="match status" value="1"/>
</dbReference>
<dbReference type="PROSITE" id="PS01143">
    <property type="entry name" value="RIBOSOMAL_L31"/>
    <property type="match status" value="1"/>
</dbReference>
<proteinExistence type="inferred from homology"/>
<feature type="chain" id="PRO_1000126786" description="Large ribosomal subunit protein bL31B">
    <location>
        <begin position="1"/>
        <end position="81"/>
    </location>
</feature>
<sequence length="81" mass="9212">MKAGIHPDYKKVVFMDTNTGFKFLSGSTRGSNETVEWEDGNTYPLLKVEISSDSHPFYTGRQKFATADGRVDRFNKKYGLK</sequence>
<gene>
    <name evidence="1" type="primary">rpmE2</name>
    <name type="ordered locus">BCAH187_A5509</name>
</gene>